<protein>
    <recommendedName>
        <fullName evidence="1">GTPase Obg</fullName>
        <ecNumber evidence="1">3.6.5.-</ecNumber>
    </recommendedName>
    <alternativeName>
        <fullName evidence="1">GTP-binding protein Obg</fullName>
    </alternativeName>
</protein>
<evidence type="ECO:0000255" key="1">
    <source>
        <dbReference type="HAMAP-Rule" id="MF_01454"/>
    </source>
</evidence>
<evidence type="ECO:0000255" key="2">
    <source>
        <dbReference type="PROSITE-ProRule" id="PRU01231"/>
    </source>
</evidence>
<evidence type="ECO:0000256" key="3">
    <source>
        <dbReference type="SAM" id="MobiDB-lite"/>
    </source>
</evidence>
<dbReference type="EC" id="3.6.5.-" evidence="1"/>
<dbReference type="EMBL" id="CP000269">
    <property type="protein sequence ID" value="ABR89581.1"/>
    <property type="molecule type" value="Genomic_DNA"/>
</dbReference>
<dbReference type="RefSeq" id="WP_012080841.1">
    <property type="nucleotide sequence ID" value="NC_009659.1"/>
</dbReference>
<dbReference type="SMR" id="A6T2D5"/>
<dbReference type="STRING" id="375286.mma_2992"/>
<dbReference type="KEGG" id="mms:mma_2992"/>
<dbReference type="eggNOG" id="COG0536">
    <property type="taxonomic scope" value="Bacteria"/>
</dbReference>
<dbReference type="HOGENOM" id="CLU_011747_2_0_4"/>
<dbReference type="OrthoDB" id="9807318at2"/>
<dbReference type="Proteomes" id="UP000006388">
    <property type="component" value="Chromosome"/>
</dbReference>
<dbReference type="GO" id="GO:0005737">
    <property type="term" value="C:cytoplasm"/>
    <property type="evidence" value="ECO:0007669"/>
    <property type="project" value="UniProtKB-SubCell"/>
</dbReference>
<dbReference type="GO" id="GO:0005525">
    <property type="term" value="F:GTP binding"/>
    <property type="evidence" value="ECO:0007669"/>
    <property type="project" value="UniProtKB-UniRule"/>
</dbReference>
<dbReference type="GO" id="GO:0003924">
    <property type="term" value="F:GTPase activity"/>
    <property type="evidence" value="ECO:0007669"/>
    <property type="project" value="UniProtKB-UniRule"/>
</dbReference>
<dbReference type="GO" id="GO:0000287">
    <property type="term" value="F:magnesium ion binding"/>
    <property type="evidence" value="ECO:0007669"/>
    <property type="project" value="InterPro"/>
</dbReference>
<dbReference type="GO" id="GO:0042254">
    <property type="term" value="P:ribosome biogenesis"/>
    <property type="evidence" value="ECO:0007669"/>
    <property type="project" value="UniProtKB-UniRule"/>
</dbReference>
<dbReference type="CDD" id="cd01898">
    <property type="entry name" value="Obg"/>
    <property type="match status" value="1"/>
</dbReference>
<dbReference type="FunFam" id="2.70.210.12:FF:000001">
    <property type="entry name" value="GTPase Obg"/>
    <property type="match status" value="1"/>
</dbReference>
<dbReference type="Gene3D" id="2.70.210.12">
    <property type="entry name" value="GTP1/OBG domain"/>
    <property type="match status" value="1"/>
</dbReference>
<dbReference type="Gene3D" id="3.40.50.300">
    <property type="entry name" value="P-loop containing nucleotide triphosphate hydrolases"/>
    <property type="match status" value="1"/>
</dbReference>
<dbReference type="HAMAP" id="MF_01454">
    <property type="entry name" value="GTPase_Obg"/>
    <property type="match status" value="1"/>
</dbReference>
<dbReference type="InterPro" id="IPR031167">
    <property type="entry name" value="G_OBG"/>
</dbReference>
<dbReference type="InterPro" id="IPR006073">
    <property type="entry name" value="GTP-bd"/>
</dbReference>
<dbReference type="InterPro" id="IPR014100">
    <property type="entry name" value="GTP-bd_Obg/CgtA"/>
</dbReference>
<dbReference type="InterPro" id="IPR006074">
    <property type="entry name" value="GTP1-OBG_CS"/>
</dbReference>
<dbReference type="InterPro" id="IPR006169">
    <property type="entry name" value="GTP1_OBG_dom"/>
</dbReference>
<dbReference type="InterPro" id="IPR036726">
    <property type="entry name" value="GTP1_OBG_dom_sf"/>
</dbReference>
<dbReference type="InterPro" id="IPR045086">
    <property type="entry name" value="OBG_GTPase"/>
</dbReference>
<dbReference type="InterPro" id="IPR027417">
    <property type="entry name" value="P-loop_NTPase"/>
</dbReference>
<dbReference type="NCBIfam" id="TIGR02729">
    <property type="entry name" value="Obg_CgtA"/>
    <property type="match status" value="1"/>
</dbReference>
<dbReference type="NCBIfam" id="NF008954">
    <property type="entry name" value="PRK12296.1"/>
    <property type="match status" value="1"/>
</dbReference>
<dbReference type="NCBIfam" id="NF008955">
    <property type="entry name" value="PRK12297.1"/>
    <property type="match status" value="1"/>
</dbReference>
<dbReference type="NCBIfam" id="NF008956">
    <property type="entry name" value="PRK12299.1"/>
    <property type="match status" value="1"/>
</dbReference>
<dbReference type="PANTHER" id="PTHR11702">
    <property type="entry name" value="DEVELOPMENTALLY REGULATED GTP-BINDING PROTEIN-RELATED"/>
    <property type="match status" value="1"/>
</dbReference>
<dbReference type="PANTHER" id="PTHR11702:SF31">
    <property type="entry name" value="MITOCHONDRIAL RIBOSOME-ASSOCIATED GTPASE 2"/>
    <property type="match status" value="1"/>
</dbReference>
<dbReference type="Pfam" id="PF01018">
    <property type="entry name" value="GTP1_OBG"/>
    <property type="match status" value="1"/>
</dbReference>
<dbReference type="Pfam" id="PF01926">
    <property type="entry name" value="MMR_HSR1"/>
    <property type="match status" value="1"/>
</dbReference>
<dbReference type="PIRSF" id="PIRSF002401">
    <property type="entry name" value="GTP_bd_Obg/CgtA"/>
    <property type="match status" value="1"/>
</dbReference>
<dbReference type="PRINTS" id="PR00326">
    <property type="entry name" value="GTP1OBG"/>
</dbReference>
<dbReference type="SUPFAM" id="SSF82051">
    <property type="entry name" value="Obg GTP-binding protein N-terminal domain"/>
    <property type="match status" value="1"/>
</dbReference>
<dbReference type="SUPFAM" id="SSF52540">
    <property type="entry name" value="P-loop containing nucleoside triphosphate hydrolases"/>
    <property type="match status" value="1"/>
</dbReference>
<dbReference type="PROSITE" id="PS51710">
    <property type="entry name" value="G_OBG"/>
    <property type="match status" value="1"/>
</dbReference>
<dbReference type="PROSITE" id="PS00905">
    <property type="entry name" value="GTP1_OBG"/>
    <property type="match status" value="1"/>
</dbReference>
<dbReference type="PROSITE" id="PS51883">
    <property type="entry name" value="OBG"/>
    <property type="match status" value="1"/>
</dbReference>
<feature type="chain" id="PRO_0000385984" description="GTPase Obg">
    <location>
        <begin position="1"/>
        <end position="369"/>
    </location>
</feature>
<feature type="domain" description="Obg" evidence="2">
    <location>
        <begin position="1"/>
        <end position="159"/>
    </location>
</feature>
<feature type="domain" description="OBG-type G" evidence="1">
    <location>
        <begin position="160"/>
        <end position="333"/>
    </location>
</feature>
<feature type="region of interest" description="Disordered" evidence="3">
    <location>
        <begin position="128"/>
        <end position="148"/>
    </location>
</feature>
<feature type="binding site" evidence="1">
    <location>
        <begin position="166"/>
        <end position="173"/>
    </location>
    <ligand>
        <name>GTP</name>
        <dbReference type="ChEBI" id="CHEBI:37565"/>
    </ligand>
</feature>
<feature type="binding site" evidence="1">
    <location>
        <position position="173"/>
    </location>
    <ligand>
        <name>Mg(2+)</name>
        <dbReference type="ChEBI" id="CHEBI:18420"/>
    </ligand>
</feature>
<feature type="binding site" evidence="1">
    <location>
        <begin position="191"/>
        <end position="195"/>
    </location>
    <ligand>
        <name>GTP</name>
        <dbReference type="ChEBI" id="CHEBI:37565"/>
    </ligand>
</feature>
<feature type="binding site" evidence="1">
    <location>
        <position position="193"/>
    </location>
    <ligand>
        <name>Mg(2+)</name>
        <dbReference type="ChEBI" id="CHEBI:18420"/>
    </ligand>
</feature>
<feature type="binding site" evidence="1">
    <location>
        <begin position="213"/>
        <end position="216"/>
    </location>
    <ligand>
        <name>GTP</name>
        <dbReference type="ChEBI" id="CHEBI:37565"/>
    </ligand>
</feature>
<feature type="binding site" evidence="1">
    <location>
        <begin position="283"/>
        <end position="286"/>
    </location>
    <ligand>
        <name>GTP</name>
        <dbReference type="ChEBI" id="CHEBI:37565"/>
    </ligand>
</feature>
<feature type="binding site" evidence="1">
    <location>
        <begin position="314"/>
        <end position="316"/>
    </location>
    <ligand>
        <name>GTP</name>
        <dbReference type="ChEBI" id="CHEBI:37565"/>
    </ligand>
</feature>
<reference key="1">
    <citation type="journal article" date="2007" name="PLoS Genet.">
        <title>Genome analysis of Minibacterium massiliensis highlights the convergent evolution of water-living bacteria.</title>
        <authorList>
            <person name="Audic S."/>
            <person name="Robert C."/>
            <person name="Campagna B."/>
            <person name="Parinello H."/>
            <person name="Claverie J.-M."/>
            <person name="Raoult D."/>
            <person name="Drancourt M."/>
        </authorList>
    </citation>
    <scope>NUCLEOTIDE SEQUENCE [LARGE SCALE GENOMIC DNA]</scope>
    <source>
        <strain>Marseille</strain>
    </source>
</reference>
<name>OBG_JANMA</name>
<proteinExistence type="inferred from homology"/>
<organism>
    <name type="scientific">Janthinobacterium sp. (strain Marseille)</name>
    <name type="common">Minibacterium massiliensis</name>
    <dbReference type="NCBI Taxonomy" id="375286"/>
    <lineage>
        <taxon>Bacteria</taxon>
        <taxon>Pseudomonadati</taxon>
        <taxon>Pseudomonadota</taxon>
        <taxon>Betaproteobacteria</taxon>
        <taxon>Burkholderiales</taxon>
        <taxon>Oxalobacteraceae</taxon>
        <taxon>Janthinobacterium</taxon>
    </lineage>
</organism>
<gene>
    <name evidence="1" type="primary">obg</name>
    <name type="ordered locus">mma_2992</name>
</gene>
<sequence>MKFIDEAKIEVIAGDGGNGVASFCREKFRPFGGPDGGDGGKGGSIYAVADRNINTLVDFRFAKMHKAKNGENGRGADCYGKGADDIKLRMPVGTLIIDNNDGELIADLTEHGQEVLIAKGGEGGWGNIHFKSSTNRAPRQKSEGKEGERRELRLELKVLADIGLLGMPNAGKSTFISAVSNARPKIADYPFTTLHPNLGVVRVSHEKSFVIADIPGLIEGASDGAGLGIQFLRHLQRTRLLLHIVDLAPFDNVDPVKEAKAIVKELKKYDEALFDKPRWLVLNKLDMVPEEERKKRVKDFIKRFGWKGPVFEISALTREGCSDLVTEIYEYIAVQRQAEQRTEETPQMVEEARGIDSIDPDDPRFKIID</sequence>
<accession>A6T2D5</accession>
<keyword id="KW-0963">Cytoplasm</keyword>
<keyword id="KW-0342">GTP-binding</keyword>
<keyword id="KW-0378">Hydrolase</keyword>
<keyword id="KW-0460">Magnesium</keyword>
<keyword id="KW-0479">Metal-binding</keyword>
<keyword id="KW-0547">Nucleotide-binding</keyword>
<comment type="function">
    <text evidence="1">An essential GTPase which binds GTP, GDP and possibly (p)ppGpp with moderate affinity, with high nucleotide exchange rates and a fairly low GTP hydrolysis rate. Plays a role in control of the cell cycle, stress response, ribosome biogenesis and in those bacteria that undergo differentiation, in morphogenesis control.</text>
</comment>
<comment type="cofactor">
    <cofactor evidence="1">
        <name>Mg(2+)</name>
        <dbReference type="ChEBI" id="CHEBI:18420"/>
    </cofactor>
</comment>
<comment type="subunit">
    <text evidence="1">Monomer.</text>
</comment>
<comment type="subcellular location">
    <subcellularLocation>
        <location evidence="1">Cytoplasm</location>
    </subcellularLocation>
</comment>
<comment type="similarity">
    <text evidence="1">Belongs to the TRAFAC class OBG-HflX-like GTPase superfamily. OBG GTPase family.</text>
</comment>